<sequence>MKALILVGGFGTRLRPLTLTLPKPLVEFGNRPMILHQVESLAAAGVTDIVLAVNYRPDVMVSALKKYEEQYNVKIEFSVETEPLGTAGPLKLAESILAKDDSPFFVLNSDVICDYPFQQLAEFHKRHGDEGTIVVTKVDEPSKYGVVVHKPNHPSRIDRFVEKPVEFVGNRINAGMYILNPSVLKRIELRPTSIEQETFPAIVRDGQLHSFDLEGFWMDVGQPKDFLTGTCLYLTSLTKRNSKLLAPNSEPYVYGGNVMVDPTAKIGKNCRIGPNVVIGPNVVIGDGVRLQRCVLMENSKVKDHAWIKSTIVGWNSSVGRWARLENVTVLGDDVTIADEVYVNGGSILPHKSIKQNIDVPAIIM</sequence>
<proteinExistence type="inferred from homology"/>
<reference key="1">
    <citation type="journal article" date="2005" name="Nature">
        <title>Sequencing of Aspergillus nidulans and comparative analysis with A. fumigatus and A. oryzae.</title>
        <authorList>
            <person name="Galagan J.E."/>
            <person name="Calvo S.E."/>
            <person name="Cuomo C."/>
            <person name="Ma L.-J."/>
            <person name="Wortman J.R."/>
            <person name="Batzoglou S."/>
            <person name="Lee S.-I."/>
            <person name="Bastuerkmen M."/>
            <person name="Spevak C.C."/>
            <person name="Clutterbuck J."/>
            <person name="Kapitonov V."/>
            <person name="Jurka J."/>
            <person name="Scazzocchio C."/>
            <person name="Farman M.L."/>
            <person name="Butler J."/>
            <person name="Purcell S."/>
            <person name="Harris S."/>
            <person name="Braus G.H."/>
            <person name="Draht O."/>
            <person name="Busch S."/>
            <person name="D'Enfert C."/>
            <person name="Bouchier C."/>
            <person name="Goldman G.H."/>
            <person name="Bell-Pedersen D."/>
            <person name="Griffiths-Jones S."/>
            <person name="Doonan J.H."/>
            <person name="Yu J."/>
            <person name="Vienken K."/>
            <person name="Pain A."/>
            <person name="Freitag M."/>
            <person name="Selker E.U."/>
            <person name="Archer D.B."/>
            <person name="Penalva M.A."/>
            <person name="Oakley B.R."/>
            <person name="Momany M."/>
            <person name="Tanaka T."/>
            <person name="Kumagai T."/>
            <person name="Asai K."/>
            <person name="Machida M."/>
            <person name="Nierman W.C."/>
            <person name="Denning D.W."/>
            <person name="Caddick M.X."/>
            <person name="Hynes M."/>
            <person name="Paoletti M."/>
            <person name="Fischer R."/>
            <person name="Miller B.L."/>
            <person name="Dyer P.S."/>
            <person name="Sachs M.S."/>
            <person name="Osmani S.A."/>
            <person name="Birren B.W."/>
        </authorList>
    </citation>
    <scope>NUCLEOTIDE SEQUENCE [LARGE SCALE GENOMIC DNA]</scope>
    <source>
        <strain>FGSC A4 / ATCC 38163 / CBS 112.46 / NRRL 194 / M139</strain>
    </source>
</reference>
<reference key="2">
    <citation type="journal article" date="2009" name="Fungal Genet. Biol.">
        <title>The 2008 update of the Aspergillus nidulans genome annotation: a community effort.</title>
        <authorList>
            <person name="Wortman J.R."/>
            <person name="Gilsenan J.M."/>
            <person name="Joardar V."/>
            <person name="Deegan J."/>
            <person name="Clutterbuck J."/>
            <person name="Andersen M.R."/>
            <person name="Archer D."/>
            <person name="Bencina M."/>
            <person name="Braus G."/>
            <person name="Coutinho P."/>
            <person name="von Dohren H."/>
            <person name="Doonan J."/>
            <person name="Driessen A.J."/>
            <person name="Durek P."/>
            <person name="Espeso E."/>
            <person name="Fekete E."/>
            <person name="Flipphi M."/>
            <person name="Estrada C.G."/>
            <person name="Geysens S."/>
            <person name="Goldman G."/>
            <person name="de Groot P.W."/>
            <person name="Hansen K."/>
            <person name="Harris S.D."/>
            <person name="Heinekamp T."/>
            <person name="Helmstaedt K."/>
            <person name="Henrissat B."/>
            <person name="Hofmann G."/>
            <person name="Homan T."/>
            <person name="Horio T."/>
            <person name="Horiuchi H."/>
            <person name="James S."/>
            <person name="Jones M."/>
            <person name="Karaffa L."/>
            <person name="Karanyi Z."/>
            <person name="Kato M."/>
            <person name="Keller N."/>
            <person name="Kelly D.E."/>
            <person name="Kiel J.A."/>
            <person name="Kim J.M."/>
            <person name="van der Klei I.J."/>
            <person name="Klis F.M."/>
            <person name="Kovalchuk A."/>
            <person name="Krasevec N."/>
            <person name="Kubicek C.P."/>
            <person name="Liu B."/>
            <person name="Maccabe A."/>
            <person name="Meyer V."/>
            <person name="Mirabito P."/>
            <person name="Miskei M."/>
            <person name="Mos M."/>
            <person name="Mullins J."/>
            <person name="Nelson D.R."/>
            <person name="Nielsen J."/>
            <person name="Oakley B.R."/>
            <person name="Osmani S.A."/>
            <person name="Pakula T."/>
            <person name="Paszewski A."/>
            <person name="Paulsen I."/>
            <person name="Pilsyk S."/>
            <person name="Pocsi I."/>
            <person name="Punt P.J."/>
            <person name="Ram A.F."/>
            <person name="Ren Q."/>
            <person name="Robellet X."/>
            <person name="Robson G."/>
            <person name="Seiboth B."/>
            <person name="van Solingen P."/>
            <person name="Specht T."/>
            <person name="Sun J."/>
            <person name="Taheri-Talesh N."/>
            <person name="Takeshita N."/>
            <person name="Ussery D."/>
            <person name="vanKuyk P.A."/>
            <person name="Visser H."/>
            <person name="van de Vondervoort P.J."/>
            <person name="de Vries R.P."/>
            <person name="Walton J."/>
            <person name="Xiang X."/>
            <person name="Xiong Y."/>
            <person name="Zeng A.P."/>
            <person name="Brandt B.W."/>
            <person name="Cornell M.J."/>
            <person name="van den Hondel C.A."/>
            <person name="Visser J."/>
            <person name="Oliver S.G."/>
            <person name="Turner G."/>
        </authorList>
    </citation>
    <scope>GENOME REANNOTATION</scope>
    <source>
        <strain>FGSC A4 / ATCC 38163 / CBS 112.46 / NRRL 194 / M139</strain>
    </source>
</reference>
<accession>Q5B1J4</accession>
<accession>C8VG19</accession>
<organism>
    <name type="scientific">Emericella nidulans (strain FGSC A4 / ATCC 38163 / CBS 112.46 / NRRL 194 / M139)</name>
    <name type="common">Aspergillus nidulans</name>
    <dbReference type="NCBI Taxonomy" id="227321"/>
    <lineage>
        <taxon>Eukaryota</taxon>
        <taxon>Fungi</taxon>
        <taxon>Dikarya</taxon>
        <taxon>Ascomycota</taxon>
        <taxon>Pezizomycotina</taxon>
        <taxon>Eurotiomycetes</taxon>
        <taxon>Eurotiomycetidae</taxon>
        <taxon>Eurotiales</taxon>
        <taxon>Aspergillaceae</taxon>
        <taxon>Aspergillus</taxon>
        <taxon>Aspergillus subgen. Nidulantes</taxon>
    </lineage>
</organism>
<gene>
    <name type="primary">mpg1</name>
    <name type="ORF">AN5586</name>
</gene>
<comment type="function">
    <text evidence="1">Involved in cell wall synthesis where it is required for glycosylation. Involved in cell cycle progression through cell-size checkpoint (By similarity).</text>
</comment>
<comment type="catalytic activity">
    <reaction>
        <text>alpha-D-mannose 1-phosphate + GTP + H(+) = GDP-alpha-D-mannose + diphosphate</text>
        <dbReference type="Rhea" id="RHEA:15229"/>
        <dbReference type="ChEBI" id="CHEBI:15378"/>
        <dbReference type="ChEBI" id="CHEBI:33019"/>
        <dbReference type="ChEBI" id="CHEBI:37565"/>
        <dbReference type="ChEBI" id="CHEBI:57527"/>
        <dbReference type="ChEBI" id="CHEBI:58409"/>
        <dbReference type="EC" id="2.7.7.13"/>
    </reaction>
</comment>
<comment type="pathway">
    <text>Nucleotide-sugar biosynthesis; GDP-alpha-D-mannose biosynthesis; GDP-alpha-D-mannose from alpha-D-mannose 1-phosphate (GTP route): step 1/1.</text>
</comment>
<comment type="subcellular location">
    <subcellularLocation>
        <location evidence="1">Cytoplasm</location>
    </subcellularLocation>
</comment>
<comment type="similarity">
    <text evidence="2">Belongs to the transferase hexapeptide repeat family.</text>
</comment>
<comment type="sequence caution" evidence="2">
    <conflict type="erroneous gene model prediction">
        <sequence resource="EMBL-CDS" id="EAA62229"/>
    </conflict>
</comment>
<dbReference type="EC" id="2.7.7.13"/>
<dbReference type="EMBL" id="AACD01000096">
    <property type="protein sequence ID" value="EAA62229.1"/>
    <property type="status" value="ALT_SEQ"/>
    <property type="molecule type" value="Genomic_DNA"/>
</dbReference>
<dbReference type="EMBL" id="BN001305">
    <property type="protein sequence ID" value="CBF81612.1"/>
    <property type="molecule type" value="Genomic_DNA"/>
</dbReference>
<dbReference type="RefSeq" id="XP_663190.1">
    <property type="nucleotide sequence ID" value="XM_658098.1"/>
</dbReference>
<dbReference type="SMR" id="Q5B1J4"/>
<dbReference type="FunCoup" id="Q5B1J4">
    <property type="interactions" value="1263"/>
</dbReference>
<dbReference type="STRING" id="227321.Q5B1J4"/>
<dbReference type="EnsemblFungi" id="CBF81612">
    <property type="protein sequence ID" value="CBF81612"/>
    <property type="gene ID" value="ANIA_05586"/>
</dbReference>
<dbReference type="KEGG" id="ani:ANIA_05586"/>
<dbReference type="VEuPathDB" id="FungiDB:AN5586"/>
<dbReference type="eggNOG" id="KOG1322">
    <property type="taxonomic scope" value="Eukaryota"/>
</dbReference>
<dbReference type="HOGENOM" id="CLU_029499_0_0_1"/>
<dbReference type="InParanoid" id="Q5B1J4"/>
<dbReference type="OMA" id="GPNCWIC"/>
<dbReference type="OrthoDB" id="1733332at2759"/>
<dbReference type="UniPathway" id="UPA00126">
    <property type="reaction ID" value="UER00930"/>
</dbReference>
<dbReference type="Proteomes" id="UP000000560">
    <property type="component" value="Chromosome V"/>
</dbReference>
<dbReference type="GO" id="GO:0005737">
    <property type="term" value="C:cytoplasm"/>
    <property type="evidence" value="ECO:0000318"/>
    <property type="project" value="GO_Central"/>
</dbReference>
<dbReference type="GO" id="GO:0005525">
    <property type="term" value="F:GTP binding"/>
    <property type="evidence" value="ECO:0007669"/>
    <property type="project" value="UniProtKB-KW"/>
</dbReference>
<dbReference type="GO" id="GO:0004475">
    <property type="term" value="F:mannose-1-phosphate guanylyltransferase (GTP) activity"/>
    <property type="evidence" value="ECO:0000318"/>
    <property type="project" value="GO_Central"/>
</dbReference>
<dbReference type="GO" id="GO:0000032">
    <property type="term" value="P:cell wall mannoprotein biosynthetic process"/>
    <property type="evidence" value="ECO:0007669"/>
    <property type="project" value="EnsemblFungi"/>
</dbReference>
<dbReference type="GO" id="GO:0009298">
    <property type="term" value="P:GDP-mannose biosynthetic process"/>
    <property type="evidence" value="ECO:0000318"/>
    <property type="project" value="GO_Central"/>
</dbReference>
<dbReference type="GO" id="GO:0006486">
    <property type="term" value="P:protein glycosylation"/>
    <property type="evidence" value="ECO:0000318"/>
    <property type="project" value="GO_Central"/>
</dbReference>
<dbReference type="CDD" id="cd05824">
    <property type="entry name" value="LbH_M1P_guanylylT_C"/>
    <property type="match status" value="1"/>
</dbReference>
<dbReference type="CDD" id="cd06425">
    <property type="entry name" value="M1P_guanylylT_B_like_N"/>
    <property type="match status" value="1"/>
</dbReference>
<dbReference type="FunFam" id="2.160.10.10:FF:000017">
    <property type="entry name" value="Mannose-1-phosphate guanyltransferase"/>
    <property type="match status" value="1"/>
</dbReference>
<dbReference type="FunFam" id="3.90.550.10:FF:000013">
    <property type="entry name" value="mannose-1-phosphate guanyltransferase beta"/>
    <property type="match status" value="1"/>
</dbReference>
<dbReference type="Gene3D" id="2.160.10.10">
    <property type="entry name" value="Hexapeptide repeat proteins"/>
    <property type="match status" value="1"/>
</dbReference>
<dbReference type="Gene3D" id="3.90.550.10">
    <property type="entry name" value="Spore Coat Polysaccharide Biosynthesis Protein SpsA, Chain A"/>
    <property type="match status" value="1"/>
</dbReference>
<dbReference type="InterPro" id="IPR056729">
    <property type="entry name" value="GMPPB_C"/>
</dbReference>
<dbReference type="InterPro" id="IPR045233">
    <property type="entry name" value="GMPPB_N"/>
</dbReference>
<dbReference type="InterPro" id="IPR018357">
    <property type="entry name" value="Hexapep_transf_CS"/>
</dbReference>
<dbReference type="InterPro" id="IPR050486">
    <property type="entry name" value="Mannose-1P_guanyltransferase"/>
</dbReference>
<dbReference type="InterPro" id="IPR005835">
    <property type="entry name" value="NTP_transferase_dom"/>
</dbReference>
<dbReference type="InterPro" id="IPR029044">
    <property type="entry name" value="Nucleotide-diphossugar_trans"/>
</dbReference>
<dbReference type="PANTHER" id="PTHR22572">
    <property type="entry name" value="SUGAR-1-PHOSPHATE GUANYL TRANSFERASE"/>
    <property type="match status" value="1"/>
</dbReference>
<dbReference type="Pfam" id="PF25087">
    <property type="entry name" value="GMPPB_C"/>
    <property type="match status" value="1"/>
</dbReference>
<dbReference type="Pfam" id="PF00483">
    <property type="entry name" value="NTP_transferase"/>
    <property type="match status" value="1"/>
</dbReference>
<dbReference type="SUPFAM" id="SSF53448">
    <property type="entry name" value="Nucleotide-diphospho-sugar transferases"/>
    <property type="match status" value="1"/>
</dbReference>
<dbReference type="PROSITE" id="PS00101">
    <property type="entry name" value="HEXAPEP_TRANSFERASES"/>
    <property type="match status" value="2"/>
</dbReference>
<name>MPG1_EMENI</name>
<protein>
    <recommendedName>
        <fullName>Mannose-1-phosphate guanyltransferase</fullName>
        <ecNumber>2.7.7.13</ecNumber>
    </recommendedName>
    <alternativeName>
        <fullName>GDP-mannose pyrophosphorylase</fullName>
    </alternativeName>
    <alternativeName>
        <fullName>GTP-mannose-1-phosphate guanylyltransferase</fullName>
    </alternativeName>
</protein>
<feature type="chain" id="PRO_0000238488" description="Mannose-1-phosphate guanyltransferase">
    <location>
        <begin position="1"/>
        <end position="364"/>
    </location>
</feature>
<evidence type="ECO:0000250" key="1"/>
<evidence type="ECO:0000305" key="2"/>
<keyword id="KW-0131">Cell cycle</keyword>
<keyword id="KW-0963">Cytoplasm</keyword>
<keyword id="KW-0342">GTP-binding</keyword>
<keyword id="KW-0547">Nucleotide-binding</keyword>
<keyword id="KW-0548">Nucleotidyltransferase</keyword>
<keyword id="KW-1185">Reference proteome</keyword>
<keyword id="KW-0808">Transferase</keyword>